<gene>
    <name evidence="9" type="primary">RPS29A</name>
    <name type="synonym">RPS36A</name>
    <name type="synonym">YS29A</name>
    <name type="ordered locus">YLR388W</name>
    <name type="ORF">L8084.11</name>
</gene>
<protein>
    <recommendedName>
        <fullName evidence="8">Small ribosomal subunit protein uS14A</fullName>
    </recommendedName>
    <alternativeName>
        <fullName evidence="9">40S ribosomal protein S29-A</fullName>
    </alternativeName>
    <alternativeName>
        <fullName>S36</fullName>
    </alternativeName>
    <alternativeName>
        <fullName>YS29</fullName>
    </alternativeName>
</protein>
<comment type="function">
    <text evidence="11">Component of the ribosome, a large ribonucleoprotein complex responsible for the synthesis of proteins in the cell. The small ribosomal subunit (SSU) binds messenger RNAs (mRNAs) and translates the encoded message by selecting cognate aminoacyl-transfer RNA (tRNA) molecules. The large subunit (LSU) contains the ribosomal catalytic site termed the peptidyl transferase center (PTC), which catalyzes the formation of peptide bonds, thereby polymerizing the amino acids delivered by tRNAs into a polypeptide chain. The nascent polypeptides leave the ribosome through a tunnel in the LSU and interact with protein factors that function in enzymatic processing, targeting, and the membrane insertion of nascent chains at the exit of the ribosomal tunnel.</text>
</comment>
<comment type="cofactor">
    <cofactor evidence="10">
        <name>Zn(2+)</name>
        <dbReference type="ChEBI" id="CHEBI:29105"/>
    </cofactor>
    <text evidence="10">Binds 1 zinc ion per subunit.</text>
</comment>
<comment type="subunit">
    <text evidence="7 12">Component of the small ribosomal subunit (SSU). Mature yeast ribosomes consist of a small (40S) and a large (60S) subunit. The 40S small subunit contains 1 molecule of ribosomal RNA (18S rRNA) and 33 different proteins (encoded by 57 genes). The large 60S subunit contains 3 rRNA molecules (25S, 5.8S and 5S rRNA) and 46 different proteins (encoded by 81 genes) (PubMed:22096102, PubMed:9559554).</text>
</comment>
<comment type="subcellular location">
    <subcellularLocation>
        <location evidence="4 7">Cytoplasm</location>
    </subcellularLocation>
</comment>
<comment type="miscellaneous">
    <text evidence="5">Present with 6490 molecules/cell in log phase SD medium.</text>
</comment>
<comment type="miscellaneous">
    <text evidence="10">There are 2 genes for uS14 in yeast.</text>
</comment>
<comment type="similarity">
    <text evidence="10">Belongs to the universal ribosomal protein uS14 family.</text>
</comment>
<organism>
    <name type="scientific">Saccharomyces cerevisiae (strain ATCC 204508 / S288c)</name>
    <name type="common">Baker's yeast</name>
    <dbReference type="NCBI Taxonomy" id="559292"/>
    <lineage>
        <taxon>Eukaryota</taxon>
        <taxon>Fungi</taxon>
        <taxon>Dikarya</taxon>
        <taxon>Ascomycota</taxon>
        <taxon>Saccharomycotina</taxon>
        <taxon>Saccharomycetes</taxon>
        <taxon>Saccharomycetales</taxon>
        <taxon>Saccharomycetaceae</taxon>
        <taxon>Saccharomyces</taxon>
    </lineage>
</organism>
<accession>P41057</accession>
<accession>A2TBM8</accession>
<accession>D6VZ23</accession>
<accession>P05761</accession>
<feature type="initiator methionine" description="Removed" evidence="3 6">
    <location>
        <position position="1"/>
    </location>
</feature>
<feature type="chain" id="PRO_0000131032" description="Small ribosomal subunit protein uS14A">
    <location>
        <begin position="2"/>
        <end position="56"/>
    </location>
</feature>
<feature type="binding site" evidence="2">
    <location>
        <position position="21"/>
    </location>
    <ligand>
        <name>Zn(2+)</name>
        <dbReference type="ChEBI" id="CHEBI:29105"/>
    </ligand>
</feature>
<feature type="binding site" evidence="2">
    <location>
        <position position="24"/>
    </location>
    <ligand>
        <name>Zn(2+)</name>
        <dbReference type="ChEBI" id="CHEBI:29105"/>
    </ligand>
</feature>
<feature type="binding site" evidence="2">
    <location>
        <position position="39"/>
    </location>
    <ligand>
        <name>Zn(2+)</name>
        <dbReference type="ChEBI" id="CHEBI:29105"/>
    </ligand>
</feature>
<feature type="binding site" evidence="2">
    <location>
        <position position="42"/>
    </location>
    <ligand>
        <name>Zn(2+)</name>
        <dbReference type="ChEBI" id="CHEBI:29105"/>
    </ligand>
</feature>
<feature type="modified residue" description="Phosphoserine" evidence="1">
    <location>
        <position position="25"/>
    </location>
</feature>
<feature type="sequence conflict" description="In Ref. 5; AA sequence." evidence="10" ref="5">
    <original>W</original>
    <variation>G</variation>
    <location>
        <position position="7"/>
    </location>
</feature>
<feature type="sequence conflict" description="In Ref. 4; ABM97475." evidence="10" ref="4">
    <original>Y</original>
    <variation>F</variation>
    <location>
        <position position="14"/>
    </location>
</feature>
<feature type="turn" evidence="14">
    <location>
        <begin position="5"/>
        <end position="8"/>
    </location>
</feature>
<feature type="strand" evidence="13">
    <location>
        <begin position="13"/>
        <end position="15"/>
    </location>
</feature>
<feature type="turn" evidence="13">
    <location>
        <begin position="16"/>
        <end position="18"/>
    </location>
</feature>
<feature type="strand" evidence="13">
    <location>
        <begin position="22"/>
        <end position="24"/>
    </location>
</feature>
<feature type="strand" evidence="13">
    <location>
        <begin position="28"/>
        <end position="31"/>
    </location>
</feature>
<feature type="helix" evidence="13">
    <location>
        <begin position="33"/>
        <end position="35"/>
    </location>
</feature>
<feature type="helix" evidence="13">
    <location>
        <begin position="40"/>
        <end position="45"/>
    </location>
</feature>
<feature type="helix" evidence="13">
    <location>
        <begin position="47"/>
        <end position="50"/>
    </location>
</feature>
<keyword id="KW-0002">3D-structure</keyword>
<keyword id="KW-0963">Cytoplasm</keyword>
<keyword id="KW-0903">Direct protein sequencing</keyword>
<keyword id="KW-0479">Metal-binding</keyword>
<keyword id="KW-0597">Phosphoprotein</keyword>
<keyword id="KW-1185">Reference proteome</keyword>
<keyword id="KW-0687">Ribonucleoprotein</keyword>
<keyword id="KW-0689">Ribosomal protein</keyword>
<keyword id="KW-0862">Zinc</keyword>
<dbReference type="EMBL" id="D14676">
    <property type="protein sequence ID" value="BAA03507.1"/>
    <property type="molecule type" value="Genomic_DNA"/>
</dbReference>
<dbReference type="EMBL" id="U19729">
    <property type="protein sequence ID" value="AAB82350.1"/>
    <property type="molecule type" value="Genomic_DNA"/>
</dbReference>
<dbReference type="EMBL" id="EF123131">
    <property type="protein sequence ID" value="ABM97475.1"/>
    <property type="molecule type" value="mRNA"/>
</dbReference>
<dbReference type="EMBL" id="BK006945">
    <property type="protein sequence ID" value="DAA09689.1"/>
    <property type="molecule type" value="Genomic_DNA"/>
</dbReference>
<dbReference type="PIR" id="S48503">
    <property type="entry name" value="S48503"/>
</dbReference>
<dbReference type="RefSeq" id="NP_013492.3">
    <property type="nucleotide sequence ID" value="NM_001182277.3"/>
</dbReference>
<dbReference type="PDB" id="3J6X">
    <property type="method" value="EM"/>
    <property type="resolution" value="6.10 A"/>
    <property type="chains" value="29=1-56"/>
</dbReference>
<dbReference type="PDB" id="3J6Y">
    <property type="method" value="EM"/>
    <property type="resolution" value="6.10 A"/>
    <property type="chains" value="29=1-56"/>
</dbReference>
<dbReference type="PDB" id="3J77">
    <property type="method" value="EM"/>
    <property type="resolution" value="6.20 A"/>
    <property type="chains" value="29=1-56"/>
</dbReference>
<dbReference type="PDB" id="3J78">
    <property type="method" value="EM"/>
    <property type="resolution" value="6.30 A"/>
    <property type="chains" value="29=1-56"/>
</dbReference>
<dbReference type="PDB" id="4U3M">
    <property type="method" value="X-ray"/>
    <property type="resolution" value="3.00 A"/>
    <property type="chains" value="D9/d9=2-56"/>
</dbReference>
<dbReference type="PDB" id="4U3N">
    <property type="method" value="X-ray"/>
    <property type="resolution" value="3.20 A"/>
    <property type="chains" value="D9/d9=2-56"/>
</dbReference>
<dbReference type="PDB" id="4U3U">
    <property type="method" value="X-ray"/>
    <property type="resolution" value="2.90 A"/>
    <property type="chains" value="D9/d9=2-56"/>
</dbReference>
<dbReference type="PDB" id="4U4N">
    <property type="method" value="X-ray"/>
    <property type="resolution" value="3.10 A"/>
    <property type="chains" value="D9/d9=2-56"/>
</dbReference>
<dbReference type="PDB" id="4U4O">
    <property type="method" value="X-ray"/>
    <property type="resolution" value="3.60 A"/>
    <property type="chains" value="D9/d9=2-56"/>
</dbReference>
<dbReference type="PDB" id="4U4Q">
    <property type="method" value="X-ray"/>
    <property type="resolution" value="3.00 A"/>
    <property type="chains" value="D9/d9=2-56"/>
</dbReference>
<dbReference type="PDB" id="4U4R">
    <property type="method" value="X-ray"/>
    <property type="resolution" value="2.80 A"/>
    <property type="chains" value="D9/d9=2-56"/>
</dbReference>
<dbReference type="PDB" id="4U4U">
    <property type="method" value="X-ray"/>
    <property type="resolution" value="3.00 A"/>
    <property type="chains" value="D9/d9=2-56"/>
</dbReference>
<dbReference type="PDB" id="4U4Y">
    <property type="method" value="X-ray"/>
    <property type="resolution" value="3.20 A"/>
    <property type="chains" value="D9/d9=2-56"/>
</dbReference>
<dbReference type="PDB" id="4U4Z">
    <property type="method" value="X-ray"/>
    <property type="resolution" value="3.10 A"/>
    <property type="chains" value="D9/d9=2-56"/>
</dbReference>
<dbReference type="PDB" id="4U50">
    <property type="method" value="X-ray"/>
    <property type="resolution" value="3.20 A"/>
    <property type="chains" value="D9/d9=2-56"/>
</dbReference>
<dbReference type="PDB" id="4U51">
    <property type="method" value="X-ray"/>
    <property type="resolution" value="3.20 A"/>
    <property type="chains" value="D9/d9=2-56"/>
</dbReference>
<dbReference type="PDB" id="4U52">
    <property type="method" value="X-ray"/>
    <property type="resolution" value="3.00 A"/>
    <property type="chains" value="D9/d9=2-56"/>
</dbReference>
<dbReference type="PDB" id="4U53">
    <property type="method" value="X-ray"/>
    <property type="resolution" value="3.30 A"/>
    <property type="chains" value="D9/d9=2-56"/>
</dbReference>
<dbReference type="PDB" id="4U55">
    <property type="method" value="X-ray"/>
    <property type="resolution" value="3.20 A"/>
    <property type="chains" value="D9/d9=2-56"/>
</dbReference>
<dbReference type="PDB" id="4U56">
    <property type="method" value="X-ray"/>
    <property type="resolution" value="3.45 A"/>
    <property type="chains" value="D9/d9=2-56"/>
</dbReference>
<dbReference type="PDB" id="4U6F">
    <property type="method" value="X-ray"/>
    <property type="resolution" value="3.10 A"/>
    <property type="chains" value="D9/d9=2-56"/>
</dbReference>
<dbReference type="PDB" id="4V5Z">
    <property type="method" value="EM"/>
    <property type="resolution" value="8.70 A"/>
    <property type="chains" value="An=1-55"/>
</dbReference>
<dbReference type="PDB" id="4V6I">
    <property type="method" value="EM"/>
    <property type="resolution" value="8.80 A"/>
    <property type="chains" value="AN=1-56"/>
</dbReference>
<dbReference type="PDB" id="4V7R">
    <property type="method" value="X-ray"/>
    <property type="resolution" value="4.00 A"/>
    <property type="chains" value="AS/CS=1-56"/>
</dbReference>
<dbReference type="PDB" id="4V88">
    <property type="method" value="X-ray"/>
    <property type="resolution" value="3.00 A"/>
    <property type="chains" value="Ad/Cd=1-56"/>
</dbReference>
<dbReference type="PDB" id="4V8Y">
    <property type="method" value="EM"/>
    <property type="resolution" value="4.30 A"/>
    <property type="chains" value="A3=1-56"/>
</dbReference>
<dbReference type="PDB" id="4V8Z">
    <property type="method" value="EM"/>
    <property type="resolution" value="6.60 A"/>
    <property type="chains" value="A3=1-56"/>
</dbReference>
<dbReference type="PDB" id="5DAT">
    <property type="method" value="X-ray"/>
    <property type="resolution" value="3.15 A"/>
    <property type="chains" value="D9/d9=2-56"/>
</dbReference>
<dbReference type="PDB" id="5DC3">
    <property type="method" value="X-ray"/>
    <property type="resolution" value="3.25 A"/>
    <property type="chains" value="D9/d9=2-56"/>
</dbReference>
<dbReference type="PDB" id="5DGE">
    <property type="method" value="X-ray"/>
    <property type="resolution" value="3.45 A"/>
    <property type="chains" value="D9/d9=2-56"/>
</dbReference>
<dbReference type="PDB" id="5DGF">
    <property type="method" value="X-ray"/>
    <property type="resolution" value="3.30 A"/>
    <property type="chains" value="D9/d9=2-56"/>
</dbReference>
<dbReference type="PDB" id="5DGV">
    <property type="method" value="X-ray"/>
    <property type="resolution" value="3.10 A"/>
    <property type="chains" value="D9/d9=2-56"/>
</dbReference>
<dbReference type="PDB" id="5FCI">
    <property type="method" value="X-ray"/>
    <property type="resolution" value="3.40 A"/>
    <property type="chains" value="D9/d9=2-56"/>
</dbReference>
<dbReference type="PDB" id="5FCJ">
    <property type="method" value="X-ray"/>
    <property type="resolution" value="3.10 A"/>
    <property type="chains" value="D9/d9=2-56"/>
</dbReference>
<dbReference type="PDB" id="5I4L">
    <property type="method" value="X-ray"/>
    <property type="resolution" value="3.10 A"/>
    <property type="chains" value="D9/d9=4-56"/>
</dbReference>
<dbReference type="PDB" id="5JUO">
    <property type="method" value="EM"/>
    <property type="resolution" value="4.00 A"/>
    <property type="chains" value="AC=1-56"/>
</dbReference>
<dbReference type="PDB" id="5JUP">
    <property type="method" value="EM"/>
    <property type="resolution" value="3.50 A"/>
    <property type="chains" value="AC=1-56"/>
</dbReference>
<dbReference type="PDB" id="5JUS">
    <property type="method" value="EM"/>
    <property type="resolution" value="4.20 A"/>
    <property type="chains" value="AC=1-56"/>
</dbReference>
<dbReference type="PDB" id="5JUT">
    <property type="method" value="EM"/>
    <property type="resolution" value="4.00 A"/>
    <property type="chains" value="AC=1-56"/>
</dbReference>
<dbReference type="PDB" id="5JUU">
    <property type="method" value="EM"/>
    <property type="resolution" value="4.00 A"/>
    <property type="chains" value="AC=1-56"/>
</dbReference>
<dbReference type="PDB" id="5LYB">
    <property type="method" value="X-ray"/>
    <property type="resolution" value="3.25 A"/>
    <property type="chains" value="D9/d9=4-56"/>
</dbReference>
<dbReference type="PDB" id="5M1J">
    <property type="method" value="EM"/>
    <property type="resolution" value="3.30 A"/>
    <property type="chains" value="d2=4-56"/>
</dbReference>
<dbReference type="PDB" id="5MC6">
    <property type="method" value="EM"/>
    <property type="resolution" value="3.80 A"/>
    <property type="chains" value="M=1-56"/>
</dbReference>
<dbReference type="PDB" id="5MEI">
    <property type="method" value="X-ray"/>
    <property type="resolution" value="3.50 A"/>
    <property type="chains" value="d9/e=4-56"/>
</dbReference>
<dbReference type="PDB" id="5NDG">
    <property type="method" value="X-ray"/>
    <property type="resolution" value="3.70 A"/>
    <property type="chains" value="D9/d9=4-56"/>
</dbReference>
<dbReference type="PDB" id="5NDV">
    <property type="method" value="X-ray"/>
    <property type="resolution" value="3.30 A"/>
    <property type="chains" value="D9/d9=4-56"/>
</dbReference>
<dbReference type="PDB" id="5NDW">
    <property type="method" value="X-ray"/>
    <property type="resolution" value="3.70 A"/>
    <property type="chains" value="D9/d9=4-56"/>
</dbReference>
<dbReference type="PDB" id="5OBM">
    <property type="method" value="X-ray"/>
    <property type="resolution" value="3.40 A"/>
    <property type="chains" value="D9/d9=4-56"/>
</dbReference>
<dbReference type="PDB" id="5ON6">
    <property type="method" value="X-ray"/>
    <property type="resolution" value="3.10 A"/>
    <property type="chains" value="d9/e=4-56"/>
</dbReference>
<dbReference type="PDB" id="5TBW">
    <property type="method" value="X-ray"/>
    <property type="resolution" value="3.00 A"/>
    <property type="chains" value="d9/e=4-56"/>
</dbReference>
<dbReference type="PDB" id="5TGA">
    <property type="method" value="X-ray"/>
    <property type="resolution" value="3.30 A"/>
    <property type="chains" value="D9/d9=4-56"/>
</dbReference>
<dbReference type="PDB" id="5TGM">
    <property type="method" value="X-ray"/>
    <property type="resolution" value="3.50 A"/>
    <property type="chains" value="D9/d9=4-56"/>
</dbReference>
<dbReference type="PDB" id="6FAI">
    <property type="method" value="EM"/>
    <property type="resolution" value="3.40 A"/>
    <property type="chains" value="d=1-56"/>
</dbReference>
<dbReference type="PDB" id="6GQ1">
    <property type="method" value="EM"/>
    <property type="resolution" value="4.40 A"/>
    <property type="chains" value="AT=4-56"/>
</dbReference>
<dbReference type="PDB" id="6GQB">
    <property type="method" value="EM"/>
    <property type="resolution" value="3.90 A"/>
    <property type="chains" value="AT=4-56"/>
</dbReference>
<dbReference type="PDB" id="6GQV">
    <property type="method" value="EM"/>
    <property type="resolution" value="4.00 A"/>
    <property type="chains" value="AT=4-56"/>
</dbReference>
<dbReference type="PDB" id="6HHQ">
    <property type="method" value="X-ray"/>
    <property type="resolution" value="3.10 A"/>
    <property type="chains" value="d9/e=1-56"/>
</dbReference>
<dbReference type="PDB" id="6I7O">
    <property type="method" value="EM"/>
    <property type="resolution" value="5.30 A"/>
    <property type="chains" value="M/Mb=4-56"/>
</dbReference>
<dbReference type="PDB" id="6Q8Y">
    <property type="method" value="EM"/>
    <property type="resolution" value="3.10 A"/>
    <property type="chains" value="M=4-56"/>
</dbReference>
<dbReference type="PDB" id="6RBD">
    <property type="method" value="EM"/>
    <property type="resolution" value="3.47 A"/>
    <property type="chains" value="d=1-56"/>
</dbReference>
<dbReference type="PDB" id="6RBE">
    <property type="method" value="EM"/>
    <property type="resolution" value="3.80 A"/>
    <property type="chains" value="d=1-56"/>
</dbReference>
<dbReference type="PDB" id="6S47">
    <property type="method" value="EM"/>
    <property type="resolution" value="3.28 A"/>
    <property type="chains" value="Be=2-56"/>
</dbReference>
<dbReference type="PDB" id="6SNT">
    <property type="method" value="EM"/>
    <property type="resolution" value="2.80 A"/>
    <property type="chains" value="d=1-56"/>
</dbReference>
<dbReference type="PDB" id="6SV4">
    <property type="method" value="EM"/>
    <property type="resolution" value="3.30 A"/>
    <property type="chains" value="M/Mb/Mc=1-56"/>
</dbReference>
<dbReference type="PDB" id="6T4Q">
    <property type="method" value="EM"/>
    <property type="resolution" value="2.60 A"/>
    <property type="chains" value="Sd=4-56"/>
</dbReference>
<dbReference type="PDB" id="6T7I">
    <property type="method" value="EM"/>
    <property type="resolution" value="3.20 A"/>
    <property type="chains" value="Sd=1-56"/>
</dbReference>
<dbReference type="PDB" id="6T7T">
    <property type="method" value="EM"/>
    <property type="resolution" value="3.10 A"/>
    <property type="chains" value="Sd=1-56"/>
</dbReference>
<dbReference type="PDB" id="6T83">
    <property type="method" value="EM"/>
    <property type="resolution" value="4.00 A"/>
    <property type="chains" value="4/db=1-56"/>
</dbReference>
<dbReference type="PDB" id="6TB3">
    <property type="method" value="EM"/>
    <property type="resolution" value="2.80 A"/>
    <property type="chains" value="M=4-56"/>
</dbReference>
<dbReference type="PDB" id="6TNU">
    <property type="method" value="EM"/>
    <property type="resolution" value="3.10 A"/>
    <property type="chains" value="M=4-56"/>
</dbReference>
<dbReference type="PDB" id="6WDR">
    <property type="method" value="EM"/>
    <property type="resolution" value="3.70 A"/>
    <property type="chains" value="d=20-56"/>
</dbReference>
<dbReference type="PDB" id="6WOO">
    <property type="method" value="EM"/>
    <property type="resolution" value="2.90 A"/>
    <property type="chains" value="dd=4-56"/>
</dbReference>
<dbReference type="PDB" id="6Y7C">
    <property type="method" value="EM"/>
    <property type="resolution" value="3.80 A"/>
    <property type="chains" value="d=1-56"/>
</dbReference>
<dbReference type="PDB" id="6Z6J">
    <property type="method" value="EM"/>
    <property type="resolution" value="3.40 A"/>
    <property type="chains" value="Sd=1-56"/>
</dbReference>
<dbReference type="PDB" id="6Z6K">
    <property type="method" value="EM"/>
    <property type="resolution" value="3.40 A"/>
    <property type="chains" value="Sd=1-56"/>
</dbReference>
<dbReference type="PDB" id="6ZCE">
    <property type="method" value="EM"/>
    <property type="resolution" value="5.30 A"/>
    <property type="chains" value="e=1-56"/>
</dbReference>
<dbReference type="PDB" id="6ZU9">
    <property type="method" value="EM"/>
    <property type="resolution" value="6.20 A"/>
    <property type="chains" value="N=1-56"/>
</dbReference>
<dbReference type="PDB" id="6ZVI">
    <property type="method" value="EM"/>
    <property type="resolution" value="3.00 A"/>
    <property type="chains" value="O=4-56"/>
</dbReference>
<dbReference type="PDB" id="7A1G">
    <property type="method" value="EM"/>
    <property type="resolution" value="3.00 A"/>
    <property type="chains" value="M=4-56"/>
</dbReference>
<dbReference type="PDB" id="7B7D">
    <property type="method" value="EM"/>
    <property type="resolution" value="3.30 A"/>
    <property type="chains" value="M=4-56"/>
</dbReference>
<dbReference type="PDB" id="7MPI">
    <property type="method" value="EM"/>
    <property type="resolution" value="3.05 A"/>
    <property type="chains" value="Bd=4-56"/>
</dbReference>
<dbReference type="PDB" id="7MPJ">
    <property type="method" value="EM"/>
    <property type="resolution" value="2.70 A"/>
    <property type="chains" value="Bd=4-56"/>
</dbReference>
<dbReference type="PDB" id="7N8B">
    <property type="method" value="EM"/>
    <property type="resolution" value="3.05 A"/>
    <property type="chains" value="Bd=4-56"/>
</dbReference>
<dbReference type="PDB" id="7NRC">
    <property type="method" value="EM"/>
    <property type="resolution" value="3.90 A"/>
    <property type="chains" value="SM=4-56"/>
</dbReference>
<dbReference type="PDB" id="7NRD">
    <property type="method" value="EM"/>
    <property type="resolution" value="4.36 A"/>
    <property type="chains" value="SM=4-56"/>
</dbReference>
<dbReference type="PDB" id="7ZPQ">
    <property type="method" value="EM"/>
    <property type="resolution" value="3.47 A"/>
    <property type="chains" value="Ad=4-56"/>
</dbReference>
<dbReference type="PDB" id="7ZRS">
    <property type="method" value="EM"/>
    <property type="resolution" value="4.80 A"/>
    <property type="chains" value="Ad=4-56"/>
</dbReference>
<dbReference type="PDB" id="7ZUW">
    <property type="method" value="EM"/>
    <property type="resolution" value="4.30 A"/>
    <property type="chains" value="Ad=4-56"/>
</dbReference>
<dbReference type="PDB" id="7ZUX">
    <property type="method" value="EM"/>
    <property type="resolution" value="2.50 A"/>
    <property type="chains" value="Dd=4-56"/>
</dbReference>
<dbReference type="PDB" id="7ZW0">
    <property type="method" value="EM"/>
    <property type="resolution" value="2.40 A"/>
    <property type="chains" value="sM=1-56"/>
</dbReference>
<dbReference type="PDB" id="8BN3">
    <property type="method" value="EM"/>
    <property type="resolution" value="2.40 A"/>
    <property type="chains" value="D9=4-56"/>
</dbReference>
<dbReference type="PDB" id="8BQD">
    <property type="method" value="EM"/>
    <property type="resolution" value="3.90 A"/>
    <property type="chains" value="M=4-56"/>
</dbReference>
<dbReference type="PDB" id="8BQX">
    <property type="method" value="EM"/>
    <property type="resolution" value="3.80 A"/>
    <property type="chains" value="M=4-56"/>
</dbReference>
<dbReference type="PDB" id="8CAH">
    <property type="method" value="EM"/>
    <property type="resolution" value="3.00 A"/>
    <property type="chains" value="M=1-56"/>
</dbReference>
<dbReference type="PDB" id="8CAS">
    <property type="method" value="EM"/>
    <property type="resolution" value="3.30 A"/>
    <property type="chains" value="N=1-56"/>
</dbReference>
<dbReference type="PDB" id="8CBJ">
    <property type="method" value="EM"/>
    <property type="resolution" value="3.80 A"/>
    <property type="chains" value="d=1-56"/>
</dbReference>
<dbReference type="PDB" id="8CCS">
    <property type="method" value="EM"/>
    <property type="resolution" value="1.97 A"/>
    <property type="chains" value="5=1-56"/>
</dbReference>
<dbReference type="PDB" id="8CDL">
    <property type="method" value="EM"/>
    <property type="resolution" value="2.72 A"/>
    <property type="chains" value="5=1-56"/>
</dbReference>
<dbReference type="PDB" id="8CDR">
    <property type="method" value="EM"/>
    <property type="resolution" value="2.04 A"/>
    <property type="chains" value="5=1-56"/>
</dbReference>
<dbReference type="PDB" id="8K2D">
    <property type="method" value="EM"/>
    <property type="resolution" value="3.20 A"/>
    <property type="chains" value="Sd=1-56"/>
</dbReference>
<dbReference type="PDB" id="8K82">
    <property type="method" value="EM"/>
    <property type="resolution" value="3.00 A"/>
    <property type="chains" value="Sd=1-56"/>
</dbReference>
<dbReference type="PDB" id="8P4V">
    <property type="method" value="X-ray"/>
    <property type="resolution" value="3.16 A"/>
    <property type="chains" value="d9/e=1-56"/>
</dbReference>
<dbReference type="PDB" id="8P9A">
    <property type="method" value="X-ray"/>
    <property type="resolution" value="2.90 A"/>
    <property type="chains" value="d9/e=1-56"/>
</dbReference>
<dbReference type="PDB" id="8T2X">
    <property type="method" value="EM"/>
    <property type="resolution" value="2.46 A"/>
    <property type="chains" value="Bd=1-56"/>
</dbReference>
<dbReference type="PDB" id="8T2Y">
    <property type="method" value="EM"/>
    <property type="resolution" value="2.20 A"/>
    <property type="chains" value="Bd=1-56"/>
</dbReference>
<dbReference type="PDB" id="8T2Z">
    <property type="method" value="EM"/>
    <property type="resolution" value="2.40 A"/>
    <property type="chains" value="Bd=1-56"/>
</dbReference>
<dbReference type="PDB" id="8T30">
    <property type="method" value="EM"/>
    <property type="resolution" value="2.88 A"/>
    <property type="chains" value="Bd=1-56"/>
</dbReference>
<dbReference type="PDB" id="8T3A">
    <property type="method" value="EM"/>
    <property type="resolution" value="2.86 A"/>
    <property type="chains" value="Bd=1-56"/>
</dbReference>
<dbReference type="PDB" id="8T3B">
    <property type="method" value="EM"/>
    <property type="resolution" value="3.08 A"/>
    <property type="chains" value="Bd=1-56"/>
</dbReference>
<dbReference type="PDB" id="8T3C">
    <property type="method" value="EM"/>
    <property type="resolution" value="3.86 A"/>
    <property type="chains" value="Bd=1-56"/>
</dbReference>
<dbReference type="PDB" id="8T3D">
    <property type="method" value="EM"/>
    <property type="resolution" value="2.95 A"/>
    <property type="chains" value="Bd=1-56"/>
</dbReference>
<dbReference type="PDB" id="8T3E">
    <property type="method" value="EM"/>
    <property type="resolution" value="3.04 A"/>
    <property type="chains" value="Bd=1-56"/>
</dbReference>
<dbReference type="PDB" id="8T3F">
    <property type="method" value="EM"/>
    <property type="resolution" value="3.09 A"/>
    <property type="chains" value="Bd=1-56"/>
</dbReference>
<dbReference type="PDB" id="8UT0">
    <property type="method" value="EM"/>
    <property type="resolution" value="3.22 A"/>
    <property type="chains" value="SM=4-56"/>
</dbReference>
<dbReference type="PDB" id="8UTI">
    <property type="method" value="EM"/>
    <property type="resolution" value="3.13 A"/>
    <property type="chains" value="SM=4-56"/>
</dbReference>
<dbReference type="PDB" id="8XU8">
    <property type="method" value="EM"/>
    <property type="resolution" value="3.40 A"/>
    <property type="chains" value="SM=4-56"/>
</dbReference>
<dbReference type="PDB" id="8Y0U">
    <property type="method" value="EM"/>
    <property type="resolution" value="3.59 A"/>
    <property type="chains" value="Sd=1-56"/>
</dbReference>
<dbReference type="PDB" id="8YLD">
    <property type="method" value="EM"/>
    <property type="resolution" value="3.90 A"/>
    <property type="chains" value="SM=4-56"/>
</dbReference>
<dbReference type="PDB" id="8YLR">
    <property type="method" value="EM"/>
    <property type="resolution" value="3.90 A"/>
    <property type="chains" value="SM=4-56"/>
</dbReference>
<dbReference type="PDB" id="8Z70">
    <property type="method" value="EM"/>
    <property type="resolution" value="3.20 A"/>
    <property type="chains" value="SM=4-56"/>
</dbReference>
<dbReference type="PDB" id="8Z71">
    <property type="method" value="EM"/>
    <property type="resolution" value="3.60 A"/>
    <property type="chains" value="SM=4-56"/>
</dbReference>
<dbReference type="PDB" id="9F9S">
    <property type="method" value="EM"/>
    <property type="resolution" value="2.90 A"/>
    <property type="chains" value="RD/SD=1-56"/>
</dbReference>
<dbReference type="PDBsum" id="3J6X"/>
<dbReference type="PDBsum" id="3J6Y"/>
<dbReference type="PDBsum" id="3J77"/>
<dbReference type="PDBsum" id="3J78"/>
<dbReference type="PDBsum" id="4U3M"/>
<dbReference type="PDBsum" id="4U3N"/>
<dbReference type="PDBsum" id="4U3U"/>
<dbReference type="PDBsum" id="4U4N"/>
<dbReference type="PDBsum" id="4U4O"/>
<dbReference type="PDBsum" id="4U4Q"/>
<dbReference type="PDBsum" id="4U4R"/>
<dbReference type="PDBsum" id="4U4U"/>
<dbReference type="PDBsum" id="4U4Y"/>
<dbReference type="PDBsum" id="4U4Z"/>
<dbReference type="PDBsum" id="4U50"/>
<dbReference type="PDBsum" id="4U51"/>
<dbReference type="PDBsum" id="4U52"/>
<dbReference type="PDBsum" id="4U53"/>
<dbReference type="PDBsum" id="4U55"/>
<dbReference type="PDBsum" id="4U56"/>
<dbReference type="PDBsum" id="4U6F"/>
<dbReference type="PDBsum" id="4V5Z"/>
<dbReference type="PDBsum" id="4V6I"/>
<dbReference type="PDBsum" id="4V7R"/>
<dbReference type="PDBsum" id="4V88"/>
<dbReference type="PDBsum" id="4V8Y"/>
<dbReference type="PDBsum" id="4V8Z"/>
<dbReference type="PDBsum" id="5DAT"/>
<dbReference type="PDBsum" id="5DC3"/>
<dbReference type="PDBsum" id="5DGE"/>
<dbReference type="PDBsum" id="5DGF"/>
<dbReference type="PDBsum" id="5DGV"/>
<dbReference type="PDBsum" id="5FCI"/>
<dbReference type="PDBsum" id="5FCJ"/>
<dbReference type="PDBsum" id="5I4L"/>
<dbReference type="PDBsum" id="5JUO"/>
<dbReference type="PDBsum" id="5JUP"/>
<dbReference type="PDBsum" id="5JUS"/>
<dbReference type="PDBsum" id="5JUT"/>
<dbReference type="PDBsum" id="5JUU"/>
<dbReference type="PDBsum" id="5LYB"/>
<dbReference type="PDBsum" id="5M1J"/>
<dbReference type="PDBsum" id="5MC6"/>
<dbReference type="PDBsum" id="5MEI"/>
<dbReference type="PDBsum" id="5NDG"/>
<dbReference type="PDBsum" id="5NDV"/>
<dbReference type="PDBsum" id="5NDW"/>
<dbReference type="PDBsum" id="5OBM"/>
<dbReference type="PDBsum" id="5ON6"/>
<dbReference type="PDBsum" id="5TBW"/>
<dbReference type="PDBsum" id="5TGA"/>
<dbReference type="PDBsum" id="5TGM"/>
<dbReference type="PDBsum" id="6FAI"/>
<dbReference type="PDBsum" id="6GQ1"/>
<dbReference type="PDBsum" id="6GQB"/>
<dbReference type="PDBsum" id="6GQV"/>
<dbReference type="PDBsum" id="6HHQ"/>
<dbReference type="PDBsum" id="6I7O"/>
<dbReference type="PDBsum" id="6Q8Y"/>
<dbReference type="PDBsum" id="6RBD"/>
<dbReference type="PDBsum" id="6RBE"/>
<dbReference type="PDBsum" id="6S47"/>
<dbReference type="PDBsum" id="6SNT"/>
<dbReference type="PDBsum" id="6SV4"/>
<dbReference type="PDBsum" id="6T4Q"/>
<dbReference type="PDBsum" id="6T7I"/>
<dbReference type="PDBsum" id="6T7T"/>
<dbReference type="PDBsum" id="6T83"/>
<dbReference type="PDBsum" id="6TB3"/>
<dbReference type="PDBsum" id="6TNU"/>
<dbReference type="PDBsum" id="6WDR"/>
<dbReference type="PDBsum" id="6WOO"/>
<dbReference type="PDBsum" id="6Y7C"/>
<dbReference type="PDBsum" id="6Z6J"/>
<dbReference type="PDBsum" id="6Z6K"/>
<dbReference type="PDBsum" id="6ZCE"/>
<dbReference type="PDBsum" id="6ZU9"/>
<dbReference type="PDBsum" id="6ZVI"/>
<dbReference type="PDBsum" id="7A1G"/>
<dbReference type="PDBsum" id="7B7D"/>
<dbReference type="PDBsum" id="7MPI"/>
<dbReference type="PDBsum" id="7MPJ"/>
<dbReference type="PDBsum" id="7N8B"/>
<dbReference type="PDBsum" id="7NRC"/>
<dbReference type="PDBsum" id="7NRD"/>
<dbReference type="PDBsum" id="7ZPQ"/>
<dbReference type="PDBsum" id="7ZRS"/>
<dbReference type="PDBsum" id="7ZUW"/>
<dbReference type="PDBsum" id="7ZUX"/>
<dbReference type="PDBsum" id="7ZW0"/>
<dbReference type="PDBsum" id="8BN3"/>
<dbReference type="PDBsum" id="8BQD"/>
<dbReference type="PDBsum" id="8BQX"/>
<dbReference type="PDBsum" id="8CAH"/>
<dbReference type="PDBsum" id="8CAS"/>
<dbReference type="PDBsum" id="8CBJ"/>
<dbReference type="PDBsum" id="8CCS"/>
<dbReference type="PDBsum" id="8CDL"/>
<dbReference type="PDBsum" id="8CDR"/>
<dbReference type="PDBsum" id="8K2D"/>
<dbReference type="PDBsum" id="8K82"/>
<dbReference type="PDBsum" id="8P4V"/>
<dbReference type="PDBsum" id="8P9A"/>
<dbReference type="PDBsum" id="8T2X"/>
<dbReference type="PDBsum" id="8T2Y"/>
<dbReference type="PDBsum" id="8T2Z"/>
<dbReference type="PDBsum" id="8T30"/>
<dbReference type="PDBsum" id="8T3A"/>
<dbReference type="PDBsum" id="8T3B"/>
<dbReference type="PDBsum" id="8T3C"/>
<dbReference type="PDBsum" id="8T3D"/>
<dbReference type="PDBsum" id="8T3E"/>
<dbReference type="PDBsum" id="8T3F"/>
<dbReference type="PDBsum" id="8UT0"/>
<dbReference type="PDBsum" id="8UTI"/>
<dbReference type="PDBsum" id="8XU8"/>
<dbReference type="PDBsum" id="8Y0U"/>
<dbReference type="PDBsum" id="8YLD"/>
<dbReference type="PDBsum" id="8YLR"/>
<dbReference type="PDBsum" id="8Z70"/>
<dbReference type="PDBsum" id="8Z71"/>
<dbReference type="PDBsum" id="9F9S"/>
<dbReference type="EMDB" id="EMD-0047"/>
<dbReference type="EMDB" id="EMD-0048"/>
<dbReference type="EMDB" id="EMD-0049"/>
<dbReference type="EMDB" id="EMD-10098"/>
<dbReference type="EMDB" id="EMD-10262"/>
<dbReference type="EMDB" id="EMD-10315"/>
<dbReference type="EMDB" id="EMD-10377"/>
<dbReference type="EMDB" id="EMD-10396"/>
<dbReference type="EMDB" id="EMD-10397"/>
<dbReference type="EMDB" id="EMD-10398"/>
<dbReference type="EMDB" id="EMD-10431"/>
<dbReference type="EMDB" id="EMD-10537"/>
<dbReference type="EMDB" id="EMD-10713"/>
<dbReference type="EMDB" id="EMD-11096"/>
<dbReference type="EMDB" id="EMD-11097"/>
<dbReference type="EMDB" id="EMD-11160"/>
<dbReference type="EMDB" id="EMD-11439"/>
<dbReference type="EMDB" id="EMD-11608"/>
<dbReference type="EMDB" id="EMD-12081"/>
<dbReference type="EMDB" id="EMD-12534"/>
<dbReference type="EMDB" id="EMD-12535"/>
<dbReference type="EMDB" id="EMD-14979"/>
<dbReference type="EMDB" id="EMD-14990"/>
<dbReference type="EMDB" id="EMD-16191"/>
<dbReference type="EMDB" id="EMD-16533"/>
<dbReference type="EMDB" id="EMD-16541"/>
<dbReference type="EMDB" id="EMD-21644"/>
<dbReference type="EMDB" id="EMD-21859"/>
<dbReference type="EMDB" id="EMD-23934"/>
<dbReference type="EMDB" id="EMD-23935"/>
<dbReference type="EMDB" id="EMD-24235"/>
<dbReference type="EMDB" id="EMD-3461"/>
<dbReference type="EMDB" id="EMD-36839"/>
<dbReference type="EMDB" id="EMD-36945"/>
<dbReference type="EMDB" id="EMD-38660"/>
<dbReference type="EMDB" id="EMD-4140"/>
<dbReference type="EMDB" id="EMD-4214"/>
<dbReference type="EMDB" id="EMD-42525"/>
<dbReference type="EMDB" id="EMD-42540"/>
<dbReference type="EMDB" id="EMD-4427"/>
<dbReference type="EMDB" id="EMD-4474"/>
<dbReference type="EMDB" id="EMD-4792"/>
<dbReference type="EMDB" id="EMD-4793"/>
<dbReference type="EMDB" id="EMD-50259"/>
<dbReference type="SMR" id="P41057"/>
<dbReference type="BioGRID" id="31647">
    <property type="interactions" value="290"/>
</dbReference>
<dbReference type="ComplexPortal" id="CPX-1599">
    <property type="entry name" value="40S cytosolic small ribosomal subunit"/>
</dbReference>
<dbReference type="DIP" id="DIP-4643N"/>
<dbReference type="FunCoup" id="P41057">
    <property type="interactions" value="913"/>
</dbReference>
<dbReference type="IntAct" id="P41057">
    <property type="interactions" value="65"/>
</dbReference>
<dbReference type="STRING" id="4932.YLR388W"/>
<dbReference type="iPTMnet" id="P41057"/>
<dbReference type="PaxDb" id="4932-YLR388W"/>
<dbReference type="PeptideAtlas" id="P41057"/>
<dbReference type="EnsemblFungi" id="YLR388W_mRNA">
    <property type="protein sequence ID" value="YLR388W"/>
    <property type="gene ID" value="YLR388W"/>
</dbReference>
<dbReference type="GeneID" id="851104"/>
<dbReference type="KEGG" id="sce:YLR388W"/>
<dbReference type="AGR" id="SGD:S000004380"/>
<dbReference type="SGD" id="S000004380">
    <property type="gene designation" value="RPS29A"/>
</dbReference>
<dbReference type="VEuPathDB" id="FungiDB:YLR388W"/>
<dbReference type="eggNOG" id="KOG3506">
    <property type="taxonomic scope" value="Eukaryota"/>
</dbReference>
<dbReference type="GeneTree" id="ENSGT00940000170141"/>
<dbReference type="HOGENOM" id="CLU_177289_1_1_1"/>
<dbReference type="InParanoid" id="P41057"/>
<dbReference type="OMA" id="CFRQCAK"/>
<dbReference type="OrthoDB" id="10252683at2759"/>
<dbReference type="BioCyc" id="YEAST:G3O-32454-MONOMER"/>
<dbReference type="Reactome" id="R-SCE-156827">
    <property type="pathway name" value="L13a-mediated translational silencing of Ceruloplasmin expression"/>
</dbReference>
<dbReference type="Reactome" id="R-SCE-1799339">
    <property type="pathway name" value="SRP-dependent cotranslational protein targeting to membrane"/>
</dbReference>
<dbReference type="Reactome" id="R-SCE-72649">
    <property type="pathway name" value="Translation initiation complex formation"/>
</dbReference>
<dbReference type="Reactome" id="R-SCE-72689">
    <property type="pathway name" value="Formation of a pool of free 40S subunits"/>
</dbReference>
<dbReference type="Reactome" id="R-SCE-72695">
    <property type="pathway name" value="Formation of the ternary complex, and subsequently, the 43S complex"/>
</dbReference>
<dbReference type="Reactome" id="R-SCE-72702">
    <property type="pathway name" value="Ribosomal scanning and start codon recognition"/>
</dbReference>
<dbReference type="Reactome" id="R-SCE-72706">
    <property type="pathway name" value="GTP hydrolysis and joining of the 60S ribosomal subunit"/>
</dbReference>
<dbReference type="Reactome" id="R-SCE-975956">
    <property type="pathway name" value="Nonsense Mediated Decay (NMD) independent of the Exon Junction Complex (EJC)"/>
</dbReference>
<dbReference type="Reactome" id="R-SCE-975957">
    <property type="pathway name" value="Nonsense Mediated Decay (NMD) enhanced by the Exon Junction Complex (EJC)"/>
</dbReference>
<dbReference type="BioGRID-ORCS" id="851104">
    <property type="hits" value="3 hits in 10 CRISPR screens"/>
</dbReference>
<dbReference type="PRO" id="PR:P41057"/>
<dbReference type="Proteomes" id="UP000002311">
    <property type="component" value="Chromosome XII"/>
</dbReference>
<dbReference type="RNAct" id="P41057">
    <property type="molecule type" value="protein"/>
</dbReference>
<dbReference type="GO" id="GO:0005829">
    <property type="term" value="C:cytosol"/>
    <property type="evidence" value="ECO:0000304"/>
    <property type="project" value="Reactome"/>
</dbReference>
<dbReference type="GO" id="GO:0022627">
    <property type="term" value="C:cytosolic small ribosomal subunit"/>
    <property type="evidence" value="ECO:0000314"/>
    <property type="project" value="SGD"/>
</dbReference>
<dbReference type="GO" id="GO:0003735">
    <property type="term" value="F:structural constituent of ribosome"/>
    <property type="evidence" value="ECO:0000314"/>
    <property type="project" value="SGD"/>
</dbReference>
<dbReference type="GO" id="GO:0008270">
    <property type="term" value="F:zinc ion binding"/>
    <property type="evidence" value="ECO:0000318"/>
    <property type="project" value="GO_Central"/>
</dbReference>
<dbReference type="GO" id="GO:0002181">
    <property type="term" value="P:cytoplasmic translation"/>
    <property type="evidence" value="ECO:0000318"/>
    <property type="project" value="GO_Central"/>
</dbReference>
<dbReference type="FunFam" id="4.10.830.10:FF:000002">
    <property type="entry name" value="40S ribosomal protein S29"/>
    <property type="match status" value="1"/>
</dbReference>
<dbReference type="Gene3D" id="4.10.830.10">
    <property type="entry name" value="30s Ribosomal Protein S14, Chain N"/>
    <property type="match status" value="1"/>
</dbReference>
<dbReference type="InterPro" id="IPR001209">
    <property type="entry name" value="Ribosomal_uS14"/>
</dbReference>
<dbReference type="InterPro" id="IPR018271">
    <property type="entry name" value="Ribosomal_uS14_CS"/>
</dbReference>
<dbReference type="InterPro" id="IPR039744">
    <property type="entry name" value="RIbosomal_uS14_euk_arc"/>
</dbReference>
<dbReference type="InterPro" id="IPR043140">
    <property type="entry name" value="Ribosomal_uS14_sf"/>
</dbReference>
<dbReference type="NCBIfam" id="NF004424">
    <property type="entry name" value="PRK05766.1"/>
    <property type="match status" value="1"/>
</dbReference>
<dbReference type="PANTHER" id="PTHR12010">
    <property type="entry name" value="40S RIBOSOMAL PROTEIN S29"/>
    <property type="match status" value="1"/>
</dbReference>
<dbReference type="PANTHER" id="PTHR12010:SF2">
    <property type="entry name" value="40S RIBOSOMAL PROTEIN S29"/>
    <property type="match status" value="1"/>
</dbReference>
<dbReference type="Pfam" id="PF00253">
    <property type="entry name" value="Ribosomal_S14"/>
    <property type="match status" value="1"/>
</dbReference>
<dbReference type="PROSITE" id="PS00527">
    <property type="entry name" value="RIBOSOMAL_S14"/>
    <property type="match status" value="1"/>
</dbReference>
<name>RS29A_YEAST</name>
<evidence type="ECO:0000250" key="1">
    <source>
        <dbReference type="UniProtKB" id="P41058"/>
    </source>
</evidence>
<evidence type="ECO:0000255" key="2"/>
<evidence type="ECO:0000269" key="3">
    <source>
    </source>
</evidence>
<evidence type="ECO:0000269" key="4">
    <source>
    </source>
</evidence>
<evidence type="ECO:0000269" key="5">
    <source>
    </source>
</evidence>
<evidence type="ECO:0000269" key="6">
    <source>
    </source>
</evidence>
<evidence type="ECO:0000269" key="7">
    <source>
    </source>
</evidence>
<evidence type="ECO:0000303" key="8">
    <source>
    </source>
</evidence>
<evidence type="ECO:0000303" key="9">
    <source>
    </source>
</evidence>
<evidence type="ECO:0000305" key="10"/>
<evidence type="ECO:0000305" key="11">
    <source>
    </source>
</evidence>
<evidence type="ECO:0000305" key="12">
    <source>
    </source>
</evidence>
<evidence type="ECO:0007829" key="13">
    <source>
        <dbReference type="PDB" id="6ZVI"/>
    </source>
</evidence>
<evidence type="ECO:0007829" key="14">
    <source>
        <dbReference type="PDB" id="7A1G"/>
    </source>
</evidence>
<sequence length="56" mass="6661">MAHENVWFSHPRRYGKGSRQCRVCSSHTGLIRKYGLNICRQCFREKANDIGFNKFR</sequence>
<reference key="1">
    <citation type="submission" date="1993-03" db="EMBL/GenBank/DDBJ databases">
        <title>S.cerevisiae YS29A gene for ribosomal protein YS29.</title>
        <authorList>
            <person name="Suzuki K."/>
            <person name="Otaka E."/>
        </authorList>
    </citation>
    <scope>NUCLEOTIDE SEQUENCE [GENOMIC DNA]</scope>
</reference>
<reference key="2">
    <citation type="journal article" date="1997" name="Nature">
        <title>The nucleotide sequence of Saccharomyces cerevisiae chromosome XII.</title>
        <authorList>
            <person name="Johnston M."/>
            <person name="Hillier L.W."/>
            <person name="Riles L."/>
            <person name="Albermann K."/>
            <person name="Andre B."/>
            <person name="Ansorge W."/>
            <person name="Benes V."/>
            <person name="Brueckner M."/>
            <person name="Delius H."/>
            <person name="Dubois E."/>
            <person name="Duesterhoeft A."/>
            <person name="Entian K.-D."/>
            <person name="Floeth M."/>
            <person name="Goffeau A."/>
            <person name="Hebling U."/>
            <person name="Heumann K."/>
            <person name="Heuss-Neitzel D."/>
            <person name="Hilbert H."/>
            <person name="Hilger F."/>
            <person name="Kleine K."/>
            <person name="Koetter P."/>
            <person name="Louis E.J."/>
            <person name="Messenguy F."/>
            <person name="Mewes H.-W."/>
            <person name="Miosga T."/>
            <person name="Moestl D."/>
            <person name="Mueller-Auer S."/>
            <person name="Nentwich U."/>
            <person name="Obermaier B."/>
            <person name="Piravandi E."/>
            <person name="Pohl T.M."/>
            <person name="Portetelle D."/>
            <person name="Purnelle B."/>
            <person name="Rechmann S."/>
            <person name="Rieger M."/>
            <person name="Rinke M."/>
            <person name="Rose M."/>
            <person name="Scharfe M."/>
            <person name="Scherens B."/>
            <person name="Scholler P."/>
            <person name="Schwager C."/>
            <person name="Schwarz S."/>
            <person name="Underwood A.P."/>
            <person name="Urrestarazu L.A."/>
            <person name="Vandenbol M."/>
            <person name="Verhasselt P."/>
            <person name="Vierendeels F."/>
            <person name="Voet M."/>
            <person name="Volckaert G."/>
            <person name="Voss H."/>
            <person name="Wambutt R."/>
            <person name="Wedler E."/>
            <person name="Wedler H."/>
            <person name="Zimmermann F.K."/>
            <person name="Zollner A."/>
            <person name="Hani J."/>
            <person name="Hoheisel J.D."/>
        </authorList>
    </citation>
    <scope>NUCLEOTIDE SEQUENCE [LARGE SCALE GENOMIC DNA]</scope>
    <source>
        <strain>ATCC 204508 / S288c</strain>
    </source>
</reference>
<reference key="3">
    <citation type="journal article" date="2014" name="G3 (Bethesda)">
        <title>The reference genome sequence of Saccharomyces cerevisiae: Then and now.</title>
        <authorList>
            <person name="Engel S.R."/>
            <person name="Dietrich F.S."/>
            <person name="Fisk D.G."/>
            <person name="Binkley G."/>
            <person name="Balakrishnan R."/>
            <person name="Costanzo M.C."/>
            <person name="Dwight S.S."/>
            <person name="Hitz B.C."/>
            <person name="Karra K."/>
            <person name="Nash R.S."/>
            <person name="Weng S."/>
            <person name="Wong E.D."/>
            <person name="Lloyd P."/>
            <person name="Skrzypek M.S."/>
            <person name="Miyasato S.R."/>
            <person name="Simison M."/>
            <person name="Cherry J.M."/>
        </authorList>
    </citation>
    <scope>GENOME REANNOTATION</scope>
    <source>
        <strain>ATCC 204508 / S288c</strain>
    </source>
</reference>
<reference key="4">
    <citation type="journal article" date="2007" name="Proc. Natl. Acad. Sci. U.S.A.">
        <title>High-density yeast-tiling array reveals previously undiscovered introns and extensive regulation of meiotic splicing.</title>
        <authorList>
            <person name="Juneau K."/>
            <person name="Palm C."/>
            <person name="Miranda M."/>
            <person name="Davis R.W."/>
        </authorList>
    </citation>
    <scope>NUCLEOTIDE SEQUENCE [MRNA] OF 1-20</scope>
    <source>
        <strain>ATCC 201390 / BY4743</strain>
    </source>
</reference>
<reference key="5">
    <citation type="journal article" date="1984" name="Mol. Gen. Genet.">
        <title>Yeast ribosomal proteins. VIII. Isolation of two proteins and sequence characterization of twenty-four proteins from cytoplasmic ribosomes.</title>
        <authorList>
            <person name="Otaka E."/>
            <person name="Higo K."/>
            <person name="Itoh T."/>
        </authorList>
    </citation>
    <scope>PROTEIN SEQUENCE OF 2-10</scope>
    <scope>CLEAVAGE OF INITIATOR METHIONINE</scope>
</reference>
<reference key="6">
    <citation type="journal article" date="1998" name="Yeast">
        <title>The list of cytoplasmic ribosomal proteins of Saccharomyces cerevisiae.</title>
        <authorList>
            <person name="Planta R.J."/>
            <person name="Mager W.H."/>
        </authorList>
    </citation>
    <scope>NOMENCLATURE</scope>
    <scope>SUBUNIT</scope>
</reference>
<reference key="7">
    <citation type="journal article" date="1999" name="J. Biol. Chem.">
        <title>The action of N-terminal acetyltransferases on yeast ribosomal proteins.</title>
        <authorList>
            <person name="Arnold R.J."/>
            <person name="Polevoda B."/>
            <person name="Reilly J.P."/>
            <person name="Sherman F."/>
        </authorList>
    </citation>
    <scope>CLEAVAGE OF INITIATOR METHIONINE</scope>
</reference>
<reference key="8">
    <citation type="journal article" date="2003" name="Nature">
        <title>Global analysis of protein localization in budding yeast.</title>
        <authorList>
            <person name="Huh W.-K."/>
            <person name="Falvo J.V."/>
            <person name="Gerke L.C."/>
            <person name="Carroll A.S."/>
            <person name="Howson R.W."/>
            <person name="Weissman J.S."/>
            <person name="O'Shea E.K."/>
        </authorList>
    </citation>
    <scope>SUBCELLULAR LOCATION [LARGE SCALE ANALYSIS]</scope>
</reference>
<reference key="9">
    <citation type="journal article" date="2003" name="Nature">
        <title>Global analysis of protein expression in yeast.</title>
        <authorList>
            <person name="Ghaemmaghami S."/>
            <person name="Huh W.-K."/>
            <person name="Bower K."/>
            <person name="Howson R.W."/>
            <person name="Belle A."/>
            <person name="Dephoure N."/>
            <person name="O'Shea E.K."/>
            <person name="Weissman J.S."/>
        </authorList>
    </citation>
    <scope>LEVEL OF PROTEIN EXPRESSION [LARGE SCALE ANALYSIS]</scope>
</reference>
<reference key="10">
    <citation type="journal article" date="2007" name="Proc. Natl. Acad. Sci. U.S.A.">
        <title>Analysis of phosphorylation sites on proteins from Saccharomyces cerevisiae by electron transfer dissociation (ETD) mass spectrometry.</title>
        <authorList>
            <person name="Chi A."/>
            <person name="Huttenhower C."/>
            <person name="Geer L.Y."/>
            <person name="Coon J.J."/>
            <person name="Syka J.E.P."/>
            <person name="Bai D.L."/>
            <person name="Shabanowitz J."/>
            <person name="Burke D.J."/>
            <person name="Troyanskaya O.G."/>
            <person name="Hunt D.F."/>
        </authorList>
    </citation>
    <scope>IDENTIFICATION BY MASS SPECTROMETRY [LARGE SCALE ANALYSIS]</scope>
</reference>
<reference key="11">
    <citation type="journal article" date="2008" name="Mol. Cell. Proteomics">
        <title>A multidimensional chromatography technology for in-depth phosphoproteome analysis.</title>
        <authorList>
            <person name="Albuquerque C.P."/>
            <person name="Smolka M.B."/>
            <person name="Payne S.H."/>
            <person name="Bafna V."/>
            <person name="Eng J."/>
            <person name="Zhou H."/>
        </authorList>
    </citation>
    <scope>IDENTIFICATION BY MASS SPECTROMETRY [LARGE SCALE ANALYSIS]</scope>
</reference>
<reference key="12">
    <citation type="journal article" date="2014" name="Curr. Opin. Struct. Biol.">
        <title>A new system for naming ribosomal proteins.</title>
        <authorList>
            <person name="Ban N."/>
            <person name="Beckmann R."/>
            <person name="Cate J.H.D."/>
            <person name="Dinman J.D."/>
            <person name="Dragon F."/>
            <person name="Ellis S.R."/>
            <person name="Lafontaine D.L.J."/>
            <person name="Lindahl L."/>
            <person name="Liljas A."/>
            <person name="Lipton J.M."/>
            <person name="McAlear M.A."/>
            <person name="Moore P.B."/>
            <person name="Noller H.F."/>
            <person name="Ortega J."/>
            <person name="Panse V.G."/>
            <person name="Ramakrishnan V."/>
            <person name="Spahn C.M.T."/>
            <person name="Steitz T.A."/>
            <person name="Tchorzewski M."/>
            <person name="Tollervey D."/>
            <person name="Warren A.J."/>
            <person name="Williamson J.R."/>
            <person name="Wilson D."/>
            <person name="Yonath A."/>
            <person name="Yusupov M."/>
        </authorList>
    </citation>
    <scope>NOMENCLATURE</scope>
</reference>
<reference key="13">
    <citation type="journal article" date="2010" name="Science">
        <title>Crystal structure of the eukaryotic ribosome.</title>
        <authorList>
            <person name="Ben-Shem A."/>
            <person name="Jenner L."/>
            <person name="Yusupova G."/>
            <person name="Yusupov M."/>
        </authorList>
    </citation>
    <scope>X-RAY CRYSTALLOGRAPHY (4.00 ANGSTROMS) OF 80S RIBOSOME</scope>
</reference>
<reference key="14">
    <citation type="journal article" date="2011" name="Science">
        <title>The structure of the eukaryotic ribosome at 3.0 A resolution.</title>
        <authorList>
            <person name="Ben-Shem A."/>
            <person name="Garreau de Loubresse N."/>
            <person name="Melnikov S."/>
            <person name="Jenner L."/>
            <person name="Yusupova G."/>
            <person name="Yusupov M."/>
        </authorList>
    </citation>
    <scope>X-RAY CRYSTALLOGRAPHY (3.00 ANGSTROMS) OF 80S RIBOSOME</scope>
    <scope>SUBUNIT</scope>
    <scope>SUBCELLULAR LOCATION</scope>
</reference>
<proteinExistence type="evidence at protein level"/>